<feature type="transit peptide" description="Mitochondrion" evidence="1">
    <location>
        <begin position="1"/>
        <end position="9"/>
    </location>
</feature>
<feature type="chain" id="PRO_0000035809" description="Leucine--tRNA ligase, mitochondrial">
    <location>
        <begin position="10"/>
        <end position="894"/>
    </location>
</feature>
<feature type="short sequence motif" description="'HIGH' region">
    <location>
        <begin position="56"/>
        <end position="66"/>
    </location>
</feature>
<feature type="short sequence motif" description="'KMSKS' region">
    <location>
        <begin position="646"/>
        <end position="650"/>
    </location>
</feature>
<feature type="binding site" evidence="1">
    <location>
        <position position="649"/>
    </location>
    <ligand>
        <name>ATP</name>
        <dbReference type="ChEBI" id="CHEBI:30616"/>
    </ligand>
</feature>
<sequence>MLPRPSSRFLSTQRGPGRAVKKLIAIGEKWKQKTTRGPPKQGTLNNRSKYILCQFPYPSGVLHIGHLRVYVISDSLNRFYKQRGYNVIHPMGWDAFGLPAENAAIERGINPAIWTRDNIAKMKQQMESMLANFDWDREVTTCDPEYYKFTQWIFLKLFENGLAYRKEAEINWDPVDKTVLANEQVDAQGRSWRSGAIVEKKQLKQWFLGITKFAPKLRKHLNQLKDWPSNVKQMQKNWIGESIGAELVFKVADSKFENLIVFTTRPETLFAVQYVALALDHPIVQKYSEVIPDLKEFLQKSDQLPSDTKEGFRLPDIKAVNPLTKEELPIFAAPYVISSYGTAPSAVMGCPGHDSRDFEFWQQNCPGEHIKTCIAPFFDDASKTSEKERQKIIDTVPFTSADGILTKESGEYSGVFTAVARKSIMGKLHSKGLSKNIIRYRIRDWLISRQRYWGTPIPIIHCDNCGPVPVPESDLPVKLPELKGLDTKGNPLSTIDEFVNVACPSCGSPAKRETDTMDTFIDSSWYYFRFLDPKNTSKPFDREIASEHMPVDIYIGGVEHAILHLLYSRFIAKFLGSINAWDDPTGIFEPFRKLVTQGMVQGKTYVDPDSGKFLTPDELTFVKDPSDGNTTIIKSNGKIPMVSYEKMSKSKHNGADPNECILRHGADATRAHILFQSPIADALNWDESKIVGIERWLQKVLCLTKNILGLEKNLAISKDYKTPTDLNDAEVKFHNDFQRFLKSITESFEVHLSLNTVISDYMKLTNLLESALKKSEVRKEMMVQNLQKLVTIIYPAVPSISEEAAELISSQMEWNQYRWPEVERTTESKFKKFQIVVNGRVKFMYTADKDFLKSGRDAVIETLLKLPEGRMYLMNKKIKKFVMKYNVISFLFHK</sequence>
<name>SYLM_SACPA</name>
<reference key="1">
    <citation type="journal article" date="1988" name="Mol. Gen. Genet.">
        <title>Divergence of the mitochondrial leucyl tRNA synthetase genes in two closely related yeasts Saccharomyces cerevisiae and Saccharomyces douglasii: a paradigm of incipient evolution.</title>
        <authorList>
            <person name="Herbert C.J."/>
            <person name="Dujardin G."/>
            <person name="Labouesse M."/>
            <person name="Slonimski P.P."/>
        </authorList>
    </citation>
    <scope>NUCLEOTIDE SEQUENCE [GENOMIC DNA]</scope>
    <source>
        <strain>HM300</strain>
    </source>
</reference>
<reference key="2">
    <citation type="journal article" date="1988" name="EMBO J.">
        <title>The NAM2 proteins from S. cerevisiae and S. douglasii are mitochondrial leucyl-tRNA synthetases, and are involved in mRNA splicing.</title>
        <authorList>
            <person name="Herbert C.J."/>
            <person name="Labouesse M."/>
            <person name="Dujardin G."/>
            <person name="Slonimski P.P."/>
        </authorList>
    </citation>
    <scope>FUNCTION</scope>
</reference>
<accession>P13503</accession>
<dbReference type="EC" id="6.1.1.4"/>
<dbReference type="EMBL" id="X12864">
    <property type="protein sequence ID" value="CAA31343.1"/>
    <property type="molecule type" value="Genomic_DNA"/>
</dbReference>
<dbReference type="SMR" id="P13503"/>
<dbReference type="VEuPathDB" id="FungiDB:SPAR_L03910"/>
<dbReference type="OrthoDB" id="15954at2759"/>
<dbReference type="GO" id="GO:0005759">
    <property type="term" value="C:mitochondrial matrix"/>
    <property type="evidence" value="ECO:0007669"/>
    <property type="project" value="UniProtKB-SubCell"/>
</dbReference>
<dbReference type="GO" id="GO:0002161">
    <property type="term" value="F:aminoacyl-tRNA deacylase activity"/>
    <property type="evidence" value="ECO:0007669"/>
    <property type="project" value="InterPro"/>
</dbReference>
<dbReference type="GO" id="GO:0005524">
    <property type="term" value="F:ATP binding"/>
    <property type="evidence" value="ECO:0007669"/>
    <property type="project" value="UniProtKB-KW"/>
</dbReference>
<dbReference type="GO" id="GO:0004823">
    <property type="term" value="F:leucine-tRNA ligase activity"/>
    <property type="evidence" value="ECO:0007669"/>
    <property type="project" value="UniProtKB-EC"/>
</dbReference>
<dbReference type="GO" id="GO:0006429">
    <property type="term" value="P:leucyl-tRNA aminoacylation"/>
    <property type="evidence" value="ECO:0007669"/>
    <property type="project" value="InterPro"/>
</dbReference>
<dbReference type="GO" id="GO:0032543">
    <property type="term" value="P:mitochondrial translation"/>
    <property type="evidence" value="ECO:0007669"/>
    <property type="project" value="TreeGrafter"/>
</dbReference>
<dbReference type="CDD" id="cd00812">
    <property type="entry name" value="LeuRS_core"/>
    <property type="match status" value="1"/>
</dbReference>
<dbReference type="FunFam" id="3.40.50.620:FF:000003">
    <property type="entry name" value="Leucine--tRNA ligase"/>
    <property type="match status" value="1"/>
</dbReference>
<dbReference type="FunFam" id="1.10.730.10:FF:000065">
    <property type="entry name" value="Leucyl-tRNA synthetase"/>
    <property type="match status" value="1"/>
</dbReference>
<dbReference type="FunFam" id="3.40.50.620:FF:000100">
    <property type="entry name" value="probable leucine--tRNA ligase, mitochondrial"/>
    <property type="match status" value="1"/>
</dbReference>
<dbReference type="Gene3D" id="3.40.50.620">
    <property type="entry name" value="HUPs"/>
    <property type="match status" value="2"/>
</dbReference>
<dbReference type="Gene3D" id="1.10.730.10">
    <property type="entry name" value="Isoleucyl-tRNA Synthetase, Domain 1"/>
    <property type="match status" value="1"/>
</dbReference>
<dbReference type="InterPro" id="IPR001412">
    <property type="entry name" value="aa-tRNA-synth_I_CS"/>
</dbReference>
<dbReference type="InterPro" id="IPR002300">
    <property type="entry name" value="aa-tRNA-synth_Ia"/>
</dbReference>
<dbReference type="InterPro" id="IPR002302">
    <property type="entry name" value="Leu-tRNA-ligase"/>
</dbReference>
<dbReference type="InterPro" id="IPR025709">
    <property type="entry name" value="Leu_tRNA-synth_edit"/>
</dbReference>
<dbReference type="InterPro" id="IPR015413">
    <property type="entry name" value="Methionyl/Leucyl_tRNA_Synth"/>
</dbReference>
<dbReference type="InterPro" id="IPR014729">
    <property type="entry name" value="Rossmann-like_a/b/a_fold"/>
</dbReference>
<dbReference type="InterPro" id="IPR009080">
    <property type="entry name" value="tRNAsynth_Ia_anticodon-bd"/>
</dbReference>
<dbReference type="InterPro" id="IPR009008">
    <property type="entry name" value="Val/Leu/Ile-tRNA-synth_edit"/>
</dbReference>
<dbReference type="NCBIfam" id="TIGR00396">
    <property type="entry name" value="leuS_bact"/>
    <property type="match status" value="1"/>
</dbReference>
<dbReference type="PANTHER" id="PTHR43740:SF2">
    <property type="entry name" value="LEUCINE--TRNA LIGASE, MITOCHONDRIAL"/>
    <property type="match status" value="1"/>
</dbReference>
<dbReference type="PANTHER" id="PTHR43740">
    <property type="entry name" value="LEUCYL-TRNA SYNTHETASE"/>
    <property type="match status" value="1"/>
</dbReference>
<dbReference type="Pfam" id="PF00133">
    <property type="entry name" value="tRNA-synt_1"/>
    <property type="match status" value="1"/>
</dbReference>
<dbReference type="Pfam" id="PF13603">
    <property type="entry name" value="tRNA-synt_1_2"/>
    <property type="match status" value="1"/>
</dbReference>
<dbReference type="Pfam" id="PF09334">
    <property type="entry name" value="tRNA-synt_1g"/>
    <property type="match status" value="1"/>
</dbReference>
<dbReference type="PRINTS" id="PR00985">
    <property type="entry name" value="TRNASYNTHLEU"/>
</dbReference>
<dbReference type="SUPFAM" id="SSF47323">
    <property type="entry name" value="Anticodon-binding domain of a subclass of class I aminoacyl-tRNA synthetases"/>
    <property type="match status" value="1"/>
</dbReference>
<dbReference type="SUPFAM" id="SSF52374">
    <property type="entry name" value="Nucleotidylyl transferase"/>
    <property type="match status" value="1"/>
</dbReference>
<dbReference type="SUPFAM" id="SSF50677">
    <property type="entry name" value="ValRS/IleRS/LeuRS editing domain"/>
    <property type="match status" value="1"/>
</dbReference>
<dbReference type="PROSITE" id="PS00178">
    <property type="entry name" value="AA_TRNA_LIGASE_I"/>
    <property type="match status" value="1"/>
</dbReference>
<proteinExistence type="inferred from homology"/>
<comment type="catalytic activity">
    <reaction>
        <text>tRNA(Leu) + L-leucine + ATP = L-leucyl-tRNA(Leu) + AMP + diphosphate</text>
        <dbReference type="Rhea" id="RHEA:11688"/>
        <dbReference type="Rhea" id="RHEA-COMP:9613"/>
        <dbReference type="Rhea" id="RHEA-COMP:9622"/>
        <dbReference type="ChEBI" id="CHEBI:30616"/>
        <dbReference type="ChEBI" id="CHEBI:33019"/>
        <dbReference type="ChEBI" id="CHEBI:57427"/>
        <dbReference type="ChEBI" id="CHEBI:78442"/>
        <dbReference type="ChEBI" id="CHEBI:78494"/>
        <dbReference type="ChEBI" id="CHEBI:456215"/>
        <dbReference type="EC" id="6.1.1.4"/>
    </reaction>
</comment>
<comment type="subcellular location">
    <subcellularLocation>
        <location>Mitochondrion matrix</location>
    </subcellularLocation>
</comment>
<comment type="similarity">
    <text evidence="2">Belongs to the class-I aminoacyl-tRNA synthetase family.</text>
</comment>
<gene>
    <name type="primary">NAM2</name>
</gene>
<organism>
    <name type="scientific">Saccharomyces paradoxus</name>
    <name type="common">Yeast</name>
    <name type="synonym">Saccharomyces douglasii</name>
    <dbReference type="NCBI Taxonomy" id="27291"/>
    <lineage>
        <taxon>Eukaryota</taxon>
        <taxon>Fungi</taxon>
        <taxon>Dikarya</taxon>
        <taxon>Ascomycota</taxon>
        <taxon>Saccharomycotina</taxon>
        <taxon>Saccharomycetes</taxon>
        <taxon>Saccharomycetales</taxon>
        <taxon>Saccharomycetaceae</taxon>
        <taxon>Saccharomyces</taxon>
    </lineage>
</organism>
<protein>
    <recommendedName>
        <fullName>Leucine--tRNA ligase, mitochondrial</fullName>
        <ecNumber>6.1.1.4</ecNumber>
    </recommendedName>
    <alternativeName>
        <fullName>Leucyl-tRNA synthetase</fullName>
        <shortName>LeuRS</shortName>
    </alternativeName>
</protein>
<evidence type="ECO:0000250" key="1"/>
<evidence type="ECO:0000305" key="2"/>
<keyword id="KW-0030">Aminoacyl-tRNA synthetase</keyword>
<keyword id="KW-0067">ATP-binding</keyword>
<keyword id="KW-0436">Ligase</keyword>
<keyword id="KW-0496">Mitochondrion</keyword>
<keyword id="KW-0547">Nucleotide-binding</keyword>
<keyword id="KW-0648">Protein biosynthesis</keyword>
<keyword id="KW-0809">Transit peptide</keyword>